<dbReference type="EMBL" id="CP000758">
    <property type="protein sequence ID" value="ABS15224.1"/>
    <property type="molecule type" value="Genomic_DNA"/>
</dbReference>
<dbReference type="RefSeq" id="WP_006466505.1">
    <property type="nucleotide sequence ID" value="NC_009667.1"/>
</dbReference>
<dbReference type="SMR" id="A6X1X0"/>
<dbReference type="STRING" id="439375.Oant_2511"/>
<dbReference type="KEGG" id="oan:Oant_2511"/>
<dbReference type="eggNOG" id="COG1742">
    <property type="taxonomic scope" value="Bacteria"/>
</dbReference>
<dbReference type="HOGENOM" id="CLU_117653_1_0_5"/>
<dbReference type="Proteomes" id="UP000002301">
    <property type="component" value="Chromosome 1"/>
</dbReference>
<dbReference type="GO" id="GO:0005886">
    <property type="term" value="C:plasma membrane"/>
    <property type="evidence" value="ECO:0007669"/>
    <property type="project" value="UniProtKB-SubCell"/>
</dbReference>
<dbReference type="HAMAP" id="MF_00010">
    <property type="entry name" value="UPF0060"/>
    <property type="match status" value="1"/>
</dbReference>
<dbReference type="InterPro" id="IPR003844">
    <property type="entry name" value="UPF0060"/>
</dbReference>
<dbReference type="NCBIfam" id="NF002586">
    <property type="entry name" value="PRK02237.1"/>
    <property type="match status" value="1"/>
</dbReference>
<dbReference type="PANTHER" id="PTHR36116">
    <property type="entry name" value="UPF0060 MEMBRANE PROTEIN YNFA"/>
    <property type="match status" value="1"/>
</dbReference>
<dbReference type="PANTHER" id="PTHR36116:SF1">
    <property type="entry name" value="UPF0060 MEMBRANE PROTEIN YNFA"/>
    <property type="match status" value="1"/>
</dbReference>
<dbReference type="Pfam" id="PF02694">
    <property type="entry name" value="UPF0060"/>
    <property type="match status" value="1"/>
</dbReference>
<dbReference type="SUPFAM" id="SSF103481">
    <property type="entry name" value="Multidrug resistance efflux transporter EmrE"/>
    <property type="match status" value="1"/>
</dbReference>
<name>Y2511_BRUA4</name>
<feature type="chain" id="PRO_1000000764" description="UPF0060 membrane protein Oant_2511">
    <location>
        <begin position="1"/>
        <end position="106"/>
    </location>
</feature>
<feature type="transmembrane region" description="Helical" evidence="1">
    <location>
        <begin position="3"/>
        <end position="23"/>
    </location>
</feature>
<feature type="transmembrane region" description="Helical" evidence="1">
    <location>
        <begin position="30"/>
        <end position="50"/>
    </location>
</feature>
<feature type="transmembrane region" description="Helical" evidence="1">
    <location>
        <begin position="60"/>
        <end position="80"/>
    </location>
</feature>
<feature type="transmembrane region" description="Helical" evidence="1">
    <location>
        <begin position="84"/>
        <end position="104"/>
    </location>
</feature>
<reference key="1">
    <citation type="journal article" date="2011" name="J. Bacteriol.">
        <title>Genome of Ochrobactrum anthropi ATCC 49188 T, a versatile opportunistic pathogen and symbiont of several eukaryotic hosts.</title>
        <authorList>
            <person name="Chain P.S."/>
            <person name="Lang D.M."/>
            <person name="Comerci D.J."/>
            <person name="Malfatti S.A."/>
            <person name="Vergez L.M."/>
            <person name="Shin M."/>
            <person name="Ugalde R.A."/>
            <person name="Garcia E."/>
            <person name="Tolmasky M.E."/>
        </authorList>
    </citation>
    <scope>NUCLEOTIDE SEQUENCE [LARGE SCALE GENOMIC DNA]</scope>
    <source>
        <strain>ATCC 49188 / DSM 6882 / CCUG 24695 / JCM 21032 / LMG 3331 / NBRC 15819 / NCTC 12168 / Alc 37</strain>
    </source>
</reference>
<evidence type="ECO:0000255" key="1">
    <source>
        <dbReference type="HAMAP-Rule" id="MF_00010"/>
    </source>
</evidence>
<proteinExistence type="inferred from homology"/>
<accession>A6X1X0</accession>
<protein>
    <recommendedName>
        <fullName evidence="1">UPF0060 membrane protein Oant_2511</fullName>
    </recommendedName>
</protein>
<comment type="subcellular location">
    <subcellularLocation>
        <location evidence="1">Cell inner membrane</location>
        <topology evidence="1">Multi-pass membrane protein</topology>
    </subcellularLocation>
</comment>
<comment type="similarity">
    <text evidence="1">Belongs to the UPF0060 family.</text>
</comment>
<organism>
    <name type="scientific">Brucella anthropi (strain ATCC 49188 / DSM 6882 / CCUG 24695 / JCM 21032 / LMG 3331 / NBRC 15819 / NCTC 12168 / Alc 37)</name>
    <name type="common">Ochrobactrum anthropi</name>
    <dbReference type="NCBI Taxonomy" id="439375"/>
    <lineage>
        <taxon>Bacteria</taxon>
        <taxon>Pseudomonadati</taxon>
        <taxon>Pseudomonadota</taxon>
        <taxon>Alphaproteobacteria</taxon>
        <taxon>Hyphomicrobiales</taxon>
        <taxon>Brucellaceae</taxon>
        <taxon>Brucella/Ochrobactrum group</taxon>
        <taxon>Brucella</taxon>
    </lineage>
</organism>
<gene>
    <name type="ordered locus">Oant_2511</name>
</gene>
<sequence>MQFAIYAAAALFEIAGCFAFWAWLKLDKSPLWLAPGMVCLALFAYLLTLIESNVAGRAYAAYGGIYIIASILWIWFAEGARPDRWDVVGACTAFAGTCIILFAPRS</sequence>
<keyword id="KW-0997">Cell inner membrane</keyword>
<keyword id="KW-1003">Cell membrane</keyword>
<keyword id="KW-0472">Membrane</keyword>
<keyword id="KW-1185">Reference proteome</keyword>
<keyword id="KW-0812">Transmembrane</keyword>
<keyword id="KW-1133">Transmembrane helix</keyword>